<organism>
    <name type="scientific">Escherichia coli O157:H7 (strain EC4115 / EHEC)</name>
    <dbReference type="NCBI Taxonomy" id="444450"/>
    <lineage>
        <taxon>Bacteria</taxon>
        <taxon>Pseudomonadati</taxon>
        <taxon>Pseudomonadota</taxon>
        <taxon>Gammaproteobacteria</taxon>
        <taxon>Enterobacterales</taxon>
        <taxon>Enterobacteriaceae</taxon>
        <taxon>Escherichia</taxon>
    </lineage>
</organism>
<feature type="chain" id="PRO_1000090522" description="Crossover junction endodeoxyribonuclease RuvC">
    <location>
        <begin position="1"/>
        <end position="173"/>
    </location>
</feature>
<feature type="active site" evidence="1">
    <location>
        <position position="8"/>
    </location>
</feature>
<feature type="active site" evidence="1">
    <location>
        <position position="67"/>
    </location>
</feature>
<feature type="active site" evidence="1">
    <location>
        <position position="139"/>
    </location>
</feature>
<feature type="binding site" evidence="1">
    <location>
        <position position="8"/>
    </location>
    <ligand>
        <name>Mg(2+)</name>
        <dbReference type="ChEBI" id="CHEBI:18420"/>
        <label>1</label>
    </ligand>
</feature>
<feature type="binding site" evidence="1">
    <location>
        <position position="67"/>
    </location>
    <ligand>
        <name>Mg(2+)</name>
        <dbReference type="ChEBI" id="CHEBI:18420"/>
        <label>2</label>
    </ligand>
</feature>
<feature type="binding site" evidence="1">
    <location>
        <position position="139"/>
    </location>
    <ligand>
        <name>Mg(2+)</name>
        <dbReference type="ChEBI" id="CHEBI:18420"/>
        <label>1</label>
    </ligand>
</feature>
<dbReference type="EC" id="3.1.21.10" evidence="1"/>
<dbReference type="EMBL" id="CP001164">
    <property type="protein sequence ID" value="ACI36244.1"/>
    <property type="molecule type" value="Genomic_DNA"/>
</dbReference>
<dbReference type="RefSeq" id="WP_001295503.1">
    <property type="nucleotide sequence ID" value="NC_011353.1"/>
</dbReference>
<dbReference type="SMR" id="B5YR08"/>
<dbReference type="GeneID" id="89516631"/>
<dbReference type="KEGG" id="ecf:ECH74115_2599"/>
<dbReference type="HOGENOM" id="CLU_091257_2_1_6"/>
<dbReference type="GO" id="GO:0005737">
    <property type="term" value="C:cytoplasm"/>
    <property type="evidence" value="ECO:0007669"/>
    <property type="project" value="UniProtKB-SubCell"/>
</dbReference>
<dbReference type="GO" id="GO:0048476">
    <property type="term" value="C:Holliday junction resolvase complex"/>
    <property type="evidence" value="ECO:0007669"/>
    <property type="project" value="UniProtKB-UniRule"/>
</dbReference>
<dbReference type="GO" id="GO:0008821">
    <property type="term" value="F:crossover junction DNA endonuclease activity"/>
    <property type="evidence" value="ECO:0007669"/>
    <property type="project" value="UniProtKB-UniRule"/>
</dbReference>
<dbReference type="GO" id="GO:0003677">
    <property type="term" value="F:DNA binding"/>
    <property type="evidence" value="ECO:0007669"/>
    <property type="project" value="UniProtKB-KW"/>
</dbReference>
<dbReference type="GO" id="GO:0000287">
    <property type="term" value="F:magnesium ion binding"/>
    <property type="evidence" value="ECO:0007669"/>
    <property type="project" value="UniProtKB-UniRule"/>
</dbReference>
<dbReference type="GO" id="GO:0006310">
    <property type="term" value="P:DNA recombination"/>
    <property type="evidence" value="ECO:0007669"/>
    <property type="project" value="UniProtKB-UniRule"/>
</dbReference>
<dbReference type="GO" id="GO:0006281">
    <property type="term" value="P:DNA repair"/>
    <property type="evidence" value="ECO:0007669"/>
    <property type="project" value="UniProtKB-UniRule"/>
</dbReference>
<dbReference type="CDD" id="cd16962">
    <property type="entry name" value="RuvC"/>
    <property type="match status" value="1"/>
</dbReference>
<dbReference type="FunFam" id="3.30.420.10:FF:000002">
    <property type="entry name" value="Crossover junction endodeoxyribonuclease RuvC"/>
    <property type="match status" value="1"/>
</dbReference>
<dbReference type="Gene3D" id="3.30.420.10">
    <property type="entry name" value="Ribonuclease H-like superfamily/Ribonuclease H"/>
    <property type="match status" value="1"/>
</dbReference>
<dbReference type="HAMAP" id="MF_00034">
    <property type="entry name" value="RuvC"/>
    <property type="match status" value="1"/>
</dbReference>
<dbReference type="InterPro" id="IPR012337">
    <property type="entry name" value="RNaseH-like_sf"/>
</dbReference>
<dbReference type="InterPro" id="IPR036397">
    <property type="entry name" value="RNaseH_sf"/>
</dbReference>
<dbReference type="InterPro" id="IPR020563">
    <property type="entry name" value="X-over_junc_endoDNase_Mg_BS"/>
</dbReference>
<dbReference type="InterPro" id="IPR002176">
    <property type="entry name" value="X-over_junc_endoDNase_RuvC"/>
</dbReference>
<dbReference type="NCBIfam" id="NF000711">
    <property type="entry name" value="PRK00039.2-1"/>
    <property type="match status" value="1"/>
</dbReference>
<dbReference type="NCBIfam" id="TIGR00228">
    <property type="entry name" value="ruvC"/>
    <property type="match status" value="1"/>
</dbReference>
<dbReference type="PANTHER" id="PTHR30194">
    <property type="entry name" value="CROSSOVER JUNCTION ENDODEOXYRIBONUCLEASE RUVC"/>
    <property type="match status" value="1"/>
</dbReference>
<dbReference type="PANTHER" id="PTHR30194:SF3">
    <property type="entry name" value="CROSSOVER JUNCTION ENDODEOXYRIBONUCLEASE RUVC"/>
    <property type="match status" value="1"/>
</dbReference>
<dbReference type="Pfam" id="PF02075">
    <property type="entry name" value="RuvC"/>
    <property type="match status" value="1"/>
</dbReference>
<dbReference type="PRINTS" id="PR00696">
    <property type="entry name" value="RSOLVASERUVC"/>
</dbReference>
<dbReference type="SUPFAM" id="SSF53098">
    <property type="entry name" value="Ribonuclease H-like"/>
    <property type="match status" value="1"/>
</dbReference>
<dbReference type="PROSITE" id="PS01321">
    <property type="entry name" value="RUVC"/>
    <property type="match status" value="1"/>
</dbReference>
<keyword id="KW-0963">Cytoplasm</keyword>
<keyword id="KW-0227">DNA damage</keyword>
<keyword id="KW-0233">DNA recombination</keyword>
<keyword id="KW-0234">DNA repair</keyword>
<keyword id="KW-0238">DNA-binding</keyword>
<keyword id="KW-0255">Endonuclease</keyword>
<keyword id="KW-0378">Hydrolase</keyword>
<keyword id="KW-0460">Magnesium</keyword>
<keyword id="KW-0479">Metal-binding</keyword>
<keyword id="KW-0540">Nuclease</keyword>
<comment type="function">
    <text evidence="1">The RuvA-RuvB-RuvC complex processes Holliday junction (HJ) DNA during genetic recombination and DNA repair. Endonuclease that resolves HJ intermediates. Cleaves cruciform DNA by making single-stranded nicks across the HJ at symmetrical positions within the homologous arms, yielding a 5'-phosphate and a 3'-hydroxyl group; requires a central core of homology in the junction. The consensus cleavage sequence is 5'-(A/T)TT(C/G)-3'. Cleavage occurs on the 3'-side of the TT dinucleotide at the point of strand exchange. HJ branch migration catalyzed by RuvA-RuvB allows RuvC to scan DNA until it finds its consensus sequence, where it cleaves and resolves the cruciform DNA.</text>
</comment>
<comment type="catalytic activity">
    <reaction evidence="1">
        <text>Endonucleolytic cleavage at a junction such as a reciprocal single-stranded crossover between two homologous DNA duplexes (Holliday junction).</text>
        <dbReference type="EC" id="3.1.21.10"/>
    </reaction>
</comment>
<comment type="cofactor">
    <cofactor evidence="1">
        <name>Mg(2+)</name>
        <dbReference type="ChEBI" id="CHEBI:18420"/>
    </cofactor>
    <text evidence="1">Binds 2 Mg(2+) ion per subunit.</text>
</comment>
<comment type="subunit">
    <text evidence="1">Homodimer which binds Holliday junction (HJ) DNA. The HJ becomes 2-fold symmetrical on binding to RuvC with unstacked arms; it has a different conformation from HJ DNA in complex with RuvA. In the full resolvosome a probable DNA-RuvA(4)-RuvB(12)-RuvC(2) complex forms which resolves the HJ.</text>
</comment>
<comment type="subcellular location">
    <subcellularLocation>
        <location evidence="1">Cytoplasm</location>
    </subcellularLocation>
</comment>
<comment type="similarity">
    <text evidence="1">Belongs to the RuvC family.</text>
</comment>
<evidence type="ECO:0000255" key="1">
    <source>
        <dbReference type="HAMAP-Rule" id="MF_00034"/>
    </source>
</evidence>
<name>RUVC_ECO5E</name>
<proteinExistence type="inferred from homology"/>
<accession>B5YR08</accession>
<sequence>MAIILGIDPGSRVTGYGVIRQVGRQLSYLGSGCIRTKVDDLPSRLKLIYAGVTEIITQFQPDYFAIEQVFMAKNADSALKLGQARGVAIVAAVNQELPVFEYAARQVKQTVVGIGSAEKSQVQHMVRTLLKLPANPQADAADALAIAITHCHVSQNAMQMSESRLNLARGRLR</sequence>
<reference key="1">
    <citation type="journal article" date="2011" name="Proc. Natl. Acad. Sci. U.S.A.">
        <title>Genomic anatomy of Escherichia coli O157:H7 outbreaks.</title>
        <authorList>
            <person name="Eppinger M."/>
            <person name="Mammel M.K."/>
            <person name="Leclerc J.E."/>
            <person name="Ravel J."/>
            <person name="Cebula T.A."/>
        </authorList>
    </citation>
    <scope>NUCLEOTIDE SEQUENCE [LARGE SCALE GENOMIC DNA]</scope>
    <source>
        <strain>EC4115 / EHEC</strain>
    </source>
</reference>
<gene>
    <name evidence="1" type="primary">ruvC</name>
    <name type="ordered locus">ECH74115_2599</name>
</gene>
<protein>
    <recommendedName>
        <fullName evidence="1">Crossover junction endodeoxyribonuclease RuvC</fullName>
        <ecNumber evidence="1">3.1.21.10</ecNumber>
    </recommendedName>
    <alternativeName>
        <fullName evidence="1">Holliday junction nuclease RuvC</fullName>
    </alternativeName>
    <alternativeName>
        <fullName evidence="1">Holliday junction resolvase RuvC</fullName>
    </alternativeName>
</protein>